<keyword id="KW-0066">ATP synthesis</keyword>
<keyword id="KW-0067">ATP-binding</keyword>
<keyword id="KW-1003">Cell membrane</keyword>
<keyword id="KW-0139">CF(1)</keyword>
<keyword id="KW-0375">Hydrogen ion transport</keyword>
<keyword id="KW-0406">Ion transport</keyword>
<keyword id="KW-0472">Membrane</keyword>
<keyword id="KW-0547">Nucleotide-binding</keyword>
<keyword id="KW-1278">Translocase</keyword>
<keyword id="KW-0813">Transport</keyword>
<sequence length="502" mass="54988">MSIRAEEISALIKQQIENYESQIQVSDVGTVIQIGDGIARAHGLDNVMSGELVEFANAVMGMALNLEENNVGIVILGPYTGIKEGDEVRRTGRIMEVPVGEALIGRVVNPLGQPVDGLGPVETTETRPIESPAPGVMDRRSVHEPLQTGIKAIDALVPIGRGQRELIIGDRQTGKTSVAIDTIINQKDQNMICIYVAIGQKESTVRTVVETLRKHGALDYTIVVTASASQPAPLLFLAPYAGVAMGEYFMYKGQHVLVVYDDLSKQAAAYRELSLFVRRPPGREAYPGDIFYLHSRLLERAAKLSDAKGGGSLTALPFVETQAGDISAYIPTNVISITDGQIFLQSDLFFSRVRPAINAGLSVSRVGGAAQIKAMKKVAGTLRLDLAAYRELEAFAQFGSDLDKATQAKLARGARTVEVLKQDLHQPIPVEKQVLIIYALTRGFLDDIPVKDVRRFEKEFYLWLDQNGQHLLEHIRTTKDLPNEDDLNQAIEAFKKTFVVSQ</sequence>
<dbReference type="EC" id="7.1.2.2" evidence="1"/>
<dbReference type="EMBL" id="D38060">
    <property type="protein sequence ID" value="BAA07253.1"/>
    <property type="molecule type" value="Genomic_DNA"/>
</dbReference>
<dbReference type="SMR" id="P42005"/>
<dbReference type="GO" id="GO:0005886">
    <property type="term" value="C:plasma membrane"/>
    <property type="evidence" value="ECO:0007669"/>
    <property type="project" value="UniProtKB-SubCell"/>
</dbReference>
<dbReference type="GO" id="GO:0045259">
    <property type="term" value="C:proton-transporting ATP synthase complex"/>
    <property type="evidence" value="ECO:0007669"/>
    <property type="project" value="UniProtKB-KW"/>
</dbReference>
<dbReference type="GO" id="GO:0043531">
    <property type="term" value="F:ADP binding"/>
    <property type="evidence" value="ECO:0007669"/>
    <property type="project" value="TreeGrafter"/>
</dbReference>
<dbReference type="GO" id="GO:0005524">
    <property type="term" value="F:ATP binding"/>
    <property type="evidence" value="ECO:0007669"/>
    <property type="project" value="UniProtKB-UniRule"/>
</dbReference>
<dbReference type="GO" id="GO:0046933">
    <property type="term" value="F:proton-transporting ATP synthase activity, rotational mechanism"/>
    <property type="evidence" value="ECO:0007669"/>
    <property type="project" value="UniProtKB-UniRule"/>
</dbReference>
<dbReference type="CDD" id="cd18113">
    <property type="entry name" value="ATP-synt_F1_alpha_C"/>
    <property type="match status" value="1"/>
</dbReference>
<dbReference type="CDD" id="cd18116">
    <property type="entry name" value="ATP-synt_F1_alpha_N"/>
    <property type="match status" value="1"/>
</dbReference>
<dbReference type="CDD" id="cd01132">
    <property type="entry name" value="F1-ATPase_alpha_CD"/>
    <property type="match status" value="1"/>
</dbReference>
<dbReference type="FunFam" id="1.20.150.20:FF:000001">
    <property type="entry name" value="ATP synthase subunit alpha"/>
    <property type="match status" value="1"/>
</dbReference>
<dbReference type="FunFam" id="2.40.30.20:FF:000001">
    <property type="entry name" value="ATP synthase subunit alpha"/>
    <property type="match status" value="1"/>
</dbReference>
<dbReference type="FunFam" id="3.40.50.300:FF:000002">
    <property type="entry name" value="ATP synthase subunit alpha"/>
    <property type="match status" value="1"/>
</dbReference>
<dbReference type="Gene3D" id="2.40.30.20">
    <property type="match status" value="1"/>
</dbReference>
<dbReference type="Gene3D" id="1.20.150.20">
    <property type="entry name" value="ATP synthase alpha/beta chain, C-terminal domain"/>
    <property type="match status" value="1"/>
</dbReference>
<dbReference type="Gene3D" id="3.40.50.300">
    <property type="entry name" value="P-loop containing nucleotide triphosphate hydrolases"/>
    <property type="match status" value="1"/>
</dbReference>
<dbReference type="HAMAP" id="MF_01346">
    <property type="entry name" value="ATP_synth_alpha_bact"/>
    <property type="match status" value="1"/>
</dbReference>
<dbReference type="InterPro" id="IPR023366">
    <property type="entry name" value="ATP_synth_asu-like_sf"/>
</dbReference>
<dbReference type="InterPro" id="IPR000793">
    <property type="entry name" value="ATP_synth_asu_C"/>
</dbReference>
<dbReference type="InterPro" id="IPR038376">
    <property type="entry name" value="ATP_synth_asu_C_sf"/>
</dbReference>
<dbReference type="InterPro" id="IPR033732">
    <property type="entry name" value="ATP_synth_F1_a_nt-bd_dom"/>
</dbReference>
<dbReference type="InterPro" id="IPR005294">
    <property type="entry name" value="ATP_synth_F1_asu"/>
</dbReference>
<dbReference type="InterPro" id="IPR020003">
    <property type="entry name" value="ATPase_a/bsu_AS"/>
</dbReference>
<dbReference type="InterPro" id="IPR004100">
    <property type="entry name" value="ATPase_F1/V1/A1_a/bsu_N"/>
</dbReference>
<dbReference type="InterPro" id="IPR036121">
    <property type="entry name" value="ATPase_F1/V1/A1_a/bsu_N_sf"/>
</dbReference>
<dbReference type="InterPro" id="IPR000194">
    <property type="entry name" value="ATPase_F1/V1/A1_a/bsu_nucl-bd"/>
</dbReference>
<dbReference type="InterPro" id="IPR027417">
    <property type="entry name" value="P-loop_NTPase"/>
</dbReference>
<dbReference type="NCBIfam" id="TIGR00962">
    <property type="entry name" value="atpA"/>
    <property type="match status" value="1"/>
</dbReference>
<dbReference type="NCBIfam" id="NF009884">
    <property type="entry name" value="PRK13343.1"/>
    <property type="match status" value="1"/>
</dbReference>
<dbReference type="PANTHER" id="PTHR48082">
    <property type="entry name" value="ATP SYNTHASE SUBUNIT ALPHA, MITOCHONDRIAL"/>
    <property type="match status" value="1"/>
</dbReference>
<dbReference type="PANTHER" id="PTHR48082:SF2">
    <property type="entry name" value="ATP SYNTHASE SUBUNIT ALPHA, MITOCHONDRIAL"/>
    <property type="match status" value="1"/>
</dbReference>
<dbReference type="Pfam" id="PF00006">
    <property type="entry name" value="ATP-synt_ab"/>
    <property type="match status" value="1"/>
</dbReference>
<dbReference type="Pfam" id="PF00306">
    <property type="entry name" value="ATP-synt_ab_C"/>
    <property type="match status" value="1"/>
</dbReference>
<dbReference type="Pfam" id="PF02874">
    <property type="entry name" value="ATP-synt_ab_N"/>
    <property type="match status" value="1"/>
</dbReference>
<dbReference type="PIRSF" id="PIRSF039088">
    <property type="entry name" value="F_ATPase_subunit_alpha"/>
    <property type="match status" value="1"/>
</dbReference>
<dbReference type="SUPFAM" id="SSF47917">
    <property type="entry name" value="C-terminal domain of alpha and beta subunits of F1 ATP synthase"/>
    <property type="match status" value="1"/>
</dbReference>
<dbReference type="SUPFAM" id="SSF50615">
    <property type="entry name" value="N-terminal domain of alpha and beta subunits of F1 ATP synthase"/>
    <property type="match status" value="1"/>
</dbReference>
<dbReference type="SUPFAM" id="SSF52540">
    <property type="entry name" value="P-loop containing nucleoside triphosphate hydrolases"/>
    <property type="match status" value="1"/>
</dbReference>
<dbReference type="PROSITE" id="PS00152">
    <property type="entry name" value="ATPASE_ALPHA_BETA"/>
    <property type="match status" value="1"/>
</dbReference>
<accession>P42005</accession>
<reference key="1">
    <citation type="submission" date="1994-08" db="EMBL/GenBank/DDBJ databases">
        <title>Nucleotide sequence of the gene for F1 subunits of proton-ATPase from Bacillus stearothermophilus.</title>
        <authorList>
            <person name="Ishizuka M."/>
            <person name="Imai H."/>
        </authorList>
    </citation>
    <scope>NUCLEOTIDE SEQUENCE [GENOMIC DNA]</scope>
</reference>
<proteinExistence type="inferred from homology"/>
<comment type="function">
    <text evidence="1">Produces ATP from ADP in the presence of a proton gradient across the membrane. The alpha chain is a regulatory subunit.</text>
</comment>
<comment type="catalytic activity">
    <reaction evidence="1">
        <text>ATP + H2O + 4 H(+)(in) = ADP + phosphate + 5 H(+)(out)</text>
        <dbReference type="Rhea" id="RHEA:57720"/>
        <dbReference type="ChEBI" id="CHEBI:15377"/>
        <dbReference type="ChEBI" id="CHEBI:15378"/>
        <dbReference type="ChEBI" id="CHEBI:30616"/>
        <dbReference type="ChEBI" id="CHEBI:43474"/>
        <dbReference type="ChEBI" id="CHEBI:456216"/>
        <dbReference type="EC" id="7.1.2.2"/>
    </reaction>
</comment>
<comment type="subunit">
    <text evidence="1">F-type ATPases have 2 components, CF(1) - the catalytic core - and CF(0) - the membrane proton channel. CF(1) has five subunits: alpha(3), beta(3), gamma(1), delta(1), epsilon(1). CF(0) has three main subunits: a(1), b(2) and c(9-12). The alpha and beta chains form an alternating ring which encloses part of the gamma chain. CF(1) is attached to CF(0) by a central stalk formed by the gamma and epsilon chains, while a peripheral stalk is formed by the delta and b chains.</text>
</comment>
<comment type="subcellular location">
    <subcellularLocation>
        <location evidence="1">Cell membrane</location>
        <topology evidence="1">Peripheral membrane protein</topology>
    </subcellularLocation>
</comment>
<comment type="similarity">
    <text evidence="1">Belongs to the ATPase alpha/beta chains family.</text>
</comment>
<name>ATPA_GEOSE</name>
<protein>
    <recommendedName>
        <fullName evidence="1">ATP synthase subunit alpha</fullName>
        <ecNumber evidence="1">7.1.2.2</ecNumber>
    </recommendedName>
    <alternativeName>
        <fullName evidence="1">ATP synthase F1 sector subunit alpha</fullName>
    </alternativeName>
    <alternativeName>
        <fullName evidence="1">F-ATPase subunit alpha</fullName>
    </alternativeName>
</protein>
<organism>
    <name type="scientific">Geobacillus stearothermophilus</name>
    <name type="common">Bacillus stearothermophilus</name>
    <dbReference type="NCBI Taxonomy" id="1422"/>
    <lineage>
        <taxon>Bacteria</taxon>
        <taxon>Bacillati</taxon>
        <taxon>Bacillota</taxon>
        <taxon>Bacilli</taxon>
        <taxon>Bacillales</taxon>
        <taxon>Anoxybacillaceae</taxon>
        <taxon>Geobacillus</taxon>
    </lineage>
</organism>
<gene>
    <name evidence="1" type="primary">atpA</name>
</gene>
<feature type="chain" id="PRO_0000144318" description="ATP synthase subunit alpha">
    <location>
        <begin position="1"/>
        <end position="502"/>
    </location>
</feature>
<feature type="region of interest" description="Disordered" evidence="2">
    <location>
        <begin position="115"/>
        <end position="137"/>
    </location>
</feature>
<feature type="binding site" evidence="1">
    <location>
        <begin position="169"/>
        <end position="176"/>
    </location>
    <ligand>
        <name>ATP</name>
        <dbReference type="ChEBI" id="CHEBI:30616"/>
    </ligand>
</feature>
<feature type="site" description="Required for activity" evidence="1">
    <location>
        <position position="362"/>
    </location>
</feature>
<evidence type="ECO:0000255" key="1">
    <source>
        <dbReference type="HAMAP-Rule" id="MF_01346"/>
    </source>
</evidence>
<evidence type="ECO:0000256" key="2">
    <source>
        <dbReference type="SAM" id="MobiDB-lite"/>
    </source>
</evidence>